<sequence length="188" mass="20591">MATYYSNDFRAGLKIMLDGEPYAVEASEFVKPGKGQAFARVKLRRLLTGTRVEKTFKSTDSAEGADVVDMNLTYLYNDGEFWHFMNNETFEQLSADAKAIGDNAKWLLDQAECIVTLWNGQPISVTPPNFVELEIVDTDPGLKGDTAGTGGKPATLSTGAVVKVPLFVQIGEVIKVDTRSGEYVSRVK</sequence>
<gene>
    <name evidence="1" type="primary">efp</name>
    <name type="ordered locus">E2348C_4473</name>
</gene>
<proteinExistence type="inferred from homology"/>
<protein>
    <recommendedName>
        <fullName evidence="1">Elongation factor P</fullName>
        <shortName evidence="1">EF-P</shortName>
    </recommendedName>
</protein>
<feature type="chain" id="PRO_1000123008" description="Elongation factor P">
    <location>
        <begin position="1"/>
        <end position="188"/>
    </location>
</feature>
<feature type="modified residue" description="N6-(3,6-diaminohexanoyl)-5-hydroxylysine" evidence="1">
    <location>
        <position position="34"/>
    </location>
</feature>
<accession>B7UPW7</accession>
<name>EFP_ECO27</name>
<evidence type="ECO:0000255" key="1">
    <source>
        <dbReference type="HAMAP-Rule" id="MF_00141"/>
    </source>
</evidence>
<comment type="function">
    <text evidence="1">Involved in peptide bond synthesis. Alleviates ribosome stalling that occurs when 3 or more consecutive Pro residues or the sequence PPG is present in a protein, possibly by augmenting the peptidyl transferase activity of the ribosome. Modification of Lys-34 is required for alleviation.</text>
</comment>
<comment type="pathway">
    <text evidence="1">Protein biosynthesis; polypeptide chain elongation.</text>
</comment>
<comment type="subcellular location">
    <subcellularLocation>
        <location evidence="1">Cytoplasm</location>
    </subcellularLocation>
</comment>
<comment type="PTM">
    <text evidence="1">Is beta-lysylated on the epsilon-amino group of Lys-34 by the combined action of EpmA and EpmB, and then hydroxylated on the C5 position of the same residue by EpmC. Lysylation is critical for the stimulatory effect of EF-P on peptide-bond formation. The lysylation moiety would extend toward the peptidyltransferase center and stabilize the terminal 3-CCA end of the tRNA. The hydroxylation of the C5 position on Lys-34 would allow additional potential stabilizing hydrogen-bond interactions with the P-tRNA.</text>
</comment>
<comment type="similarity">
    <text evidence="1">Belongs to the elongation factor P family.</text>
</comment>
<dbReference type="EMBL" id="FM180568">
    <property type="protein sequence ID" value="CAS12021.1"/>
    <property type="molecule type" value="Genomic_DNA"/>
</dbReference>
<dbReference type="RefSeq" id="WP_000257278.1">
    <property type="nucleotide sequence ID" value="NC_011601.1"/>
</dbReference>
<dbReference type="SMR" id="B7UPW7"/>
<dbReference type="GeneID" id="93777677"/>
<dbReference type="KEGG" id="ecg:E2348C_4473"/>
<dbReference type="HOGENOM" id="CLU_074944_0_0_6"/>
<dbReference type="UniPathway" id="UPA00345"/>
<dbReference type="Proteomes" id="UP000008205">
    <property type="component" value="Chromosome"/>
</dbReference>
<dbReference type="GO" id="GO:0005829">
    <property type="term" value="C:cytosol"/>
    <property type="evidence" value="ECO:0007669"/>
    <property type="project" value="UniProtKB-ARBA"/>
</dbReference>
<dbReference type="GO" id="GO:0003746">
    <property type="term" value="F:translation elongation factor activity"/>
    <property type="evidence" value="ECO:0007669"/>
    <property type="project" value="UniProtKB-UniRule"/>
</dbReference>
<dbReference type="GO" id="GO:0043043">
    <property type="term" value="P:peptide biosynthetic process"/>
    <property type="evidence" value="ECO:0007669"/>
    <property type="project" value="InterPro"/>
</dbReference>
<dbReference type="CDD" id="cd04470">
    <property type="entry name" value="S1_EF-P_repeat_1"/>
    <property type="match status" value="1"/>
</dbReference>
<dbReference type="CDD" id="cd05794">
    <property type="entry name" value="S1_EF-P_repeat_2"/>
    <property type="match status" value="1"/>
</dbReference>
<dbReference type="FunFam" id="2.30.30.30:FF:000003">
    <property type="entry name" value="Elongation factor P"/>
    <property type="match status" value="1"/>
</dbReference>
<dbReference type="FunFam" id="2.40.50.140:FF:000004">
    <property type="entry name" value="Elongation factor P"/>
    <property type="match status" value="1"/>
</dbReference>
<dbReference type="FunFam" id="2.40.50.140:FF:000009">
    <property type="entry name" value="Elongation factor P"/>
    <property type="match status" value="1"/>
</dbReference>
<dbReference type="Gene3D" id="2.30.30.30">
    <property type="match status" value="1"/>
</dbReference>
<dbReference type="Gene3D" id="2.40.50.140">
    <property type="entry name" value="Nucleic acid-binding proteins"/>
    <property type="match status" value="2"/>
</dbReference>
<dbReference type="HAMAP" id="MF_00141">
    <property type="entry name" value="EF_P"/>
    <property type="match status" value="1"/>
</dbReference>
<dbReference type="InterPro" id="IPR015365">
    <property type="entry name" value="Elong-fact-P_C"/>
</dbReference>
<dbReference type="InterPro" id="IPR012340">
    <property type="entry name" value="NA-bd_OB-fold"/>
</dbReference>
<dbReference type="InterPro" id="IPR014722">
    <property type="entry name" value="Rib_uL2_dom2"/>
</dbReference>
<dbReference type="InterPro" id="IPR020599">
    <property type="entry name" value="Transl_elong_fac_P/YeiP"/>
</dbReference>
<dbReference type="InterPro" id="IPR013185">
    <property type="entry name" value="Transl_elong_KOW-like"/>
</dbReference>
<dbReference type="InterPro" id="IPR001059">
    <property type="entry name" value="Transl_elong_P/YeiP_cen"/>
</dbReference>
<dbReference type="InterPro" id="IPR013852">
    <property type="entry name" value="Transl_elong_P/YeiP_CS"/>
</dbReference>
<dbReference type="InterPro" id="IPR011768">
    <property type="entry name" value="Transl_elongation_fac_P"/>
</dbReference>
<dbReference type="InterPro" id="IPR008991">
    <property type="entry name" value="Translation_prot_SH3-like_sf"/>
</dbReference>
<dbReference type="NCBIfam" id="TIGR00038">
    <property type="entry name" value="efp"/>
    <property type="match status" value="1"/>
</dbReference>
<dbReference type="NCBIfam" id="NF001810">
    <property type="entry name" value="PRK00529.1"/>
    <property type="match status" value="1"/>
</dbReference>
<dbReference type="PANTHER" id="PTHR30053">
    <property type="entry name" value="ELONGATION FACTOR P"/>
    <property type="match status" value="1"/>
</dbReference>
<dbReference type="PANTHER" id="PTHR30053:SF12">
    <property type="entry name" value="ELONGATION FACTOR P (EF-P) FAMILY PROTEIN"/>
    <property type="match status" value="1"/>
</dbReference>
<dbReference type="Pfam" id="PF01132">
    <property type="entry name" value="EFP"/>
    <property type="match status" value="1"/>
</dbReference>
<dbReference type="Pfam" id="PF08207">
    <property type="entry name" value="EFP_N"/>
    <property type="match status" value="1"/>
</dbReference>
<dbReference type="Pfam" id="PF09285">
    <property type="entry name" value="Elong-fact-P_C"/>
    <property type="match status" value="1"/>
</dbReference>
<dbReference type="PIRSF" id="PIRSF005901">
    <property type="entry name" value="EF-P"/>
    <property type="match status" value="1"/>
</dbReference>
<dbReference type="SMART" id="SM01185">
    <property type="entry name" value="EFP"/>
    <property type="match status" value="1"/>
</dbReference>
<dbReference type="SMART" id="SM00841">
    <property type="entry name" value="Elong-fact-P_C"/>
    <property type="match status" value="1"/>
</dbReference>
<dbReference type="SUPFAM" id="SSF50249">
    <property type="entry name" value="Nucleic acid-binding proteins"/>
    <property type="match status" value="2"/>
</dbReference>
<dbReference type="SUPFAM" id="SSF50104">
    <property type="entry name" value="Translation proteins SH3-like domain"/>
    <property type="match status" value="1"/>
</dbReference>
<dbReference type="PROSITE" id="PS01275">
    <property type="entry name" value="EFP"/>
    <property type="match status" value="1"/>
</dbReference>
<reference key="1">
    <citation type="journal article" date="2009" name="J. Bacteriol.">
        <title>Complete genome sequence and comparative genome analysis of enteropathogenic Escherichia coli O127:H6 strain E2348/69.</title>
        <authorList>
            <person name="Iguchi A."/>
            <person name="Thomson N.R."/>
            <person name="Ogura Y."/>
            <person name="Saunders D."/>
            <person name="Ooka T."/>
            <person name="Henderson I.R."/>
            <person name="Harris D."/>
            <person name="Asadulghani M."/>
            <person name="Kurokawa K."/>
            <person name="Dean P."/>
            <person name="Kenny B."/>
            <person name="Quail M.A."/>
            <person name="Thurston S."/>
            <person name="Dougan G."/>
            <person name="Hayashi T."/>
            <person name="Parkhill J."/>
            <person name="Frankel G."/>
        </authorList>
    </citation>
    <scope>NUCLEOTIDE SEQUENCE [LARGE SCALE GENOMIC DNA]</scope>
    <source>
        <strain>E2348/69 / EPEC</strain>
    </source>
</reference>
<keyword id="KW-0963">Cytoplasm</keyword>
<keyword id="KW-0251">Elongation factor</keyword>
<keyword id="KW-0379">Hydroxylation</keyword>
<keyword id="KW-0648">Protein biosynthesis</keyword>
<keyword id="KW-1185">Reference proteome</keyword>
<organism>
    <name type="scientific">Escherichia coli O127:H6 (strain E2348/69 / EPEC)</name>
    <dbReference type="NCBI Taxonomy" id="574521"/>
    <lineage>
        <taxon>Bacteria</taxon>
        <taxon>Pseudomonadati</taxon>
        <taxon>Pseudomonadota</taxon>
        <taxon>Gammaproteobacteria</taxon>
        <taxon>Enterobacterales</taxon>
        <taxon>Enterobacteriaceae</taxon>
        <taxon>Escherichia</taxon>
    </lineage>
</organism>